<reference key="1">
    <citation type="journal article" date="1997" name="Science">
        <title>The complete genome sequence of Escherichia coli K-12.</title>
        <authorList>
            <person name="Blattner F.R."/>
            <person name="Plunkett G. III"/>
            <person name="Bloch C.A."/>
            <person name="Perna N.T."/>
            <person name="Burland V."/>
            <person name="Riley M."/>
            <person name="Collado-Vides J."/>
            <person name="Glasner J.D."/>
            <person name="Rode C.K."/>
            <person name="Mayhew G.F."/>
            <person name="Gregor J."/>
            <person name="Davis N.W."/>
            <person name="Kirkpatrick H.A."/>
            <person name="Goeden M.A."/>
            <person name="Rose D.J."/>
            <person name="Mau B."/>
            <person name="Shao Y."/>
        </authorList>
    </citation>
    <scope>NUCLEOTIDE SEQUENCE [LARGE SCALE GENOMIC DNA]</scope>
    <source>
        <strain>K12 / MG1655 / ATCC 47076</strain>
    </source>
</reference>
<reference key="2">
    <citation type="journal article" date="2006" name="Mol. Syst. Biol.">
        <title>Highly accurate genome sequences of Escherichia coli K-12 strains MG1655 and W3110.</title>
        <authorList>
            <person name="Hayashi K."/>
            <person name="Morooka N."/>
            <person name="Yamamoto Y."/>
            <person name="Fujita K."/>
            <person name="Isono K."/>
            <person name="Choi S."/>
            <person name="Ohtsubo E."/>
            <person name="Baba T."/>
            <person name="Wanner B.L."/>
            <person name="Mori H."/>
            <person name="Horiuchi T."/>
        </authorList>
    </citation>
    <scope>NUCLEOTIDE SEQUENCE [LARGE SCALE GENOMIC DNA]</scope>
    <source>
        <strain>K12 / W3110 / ATCC 27325 / DSM 5911</strain>
    </source>
</reference>
<reference key="3">
    <citation type="journal article" date="1998" name="Biochemistry">
        <title>Evolution of enzymatic activities in the enolase superfamily: characterization of the (D)-glucarate/galactarate catabolic pathway in Escherichia coli.</title>
        <authorList>
            <person name="Hubbard B.K."/>
            <person name="Koch M."/>
            <person name="Palmer D.R."/>
            <person name="Babbitt P.C."/>
            <person name="Gerlt J.A."/>
        </authorList>
    </citation>
    <scope>PROTEIN SEQUENCE OF 1-15</scope>
    <scope>BIOPHYSICOCHEMICAL PROPERTIES</scope>
</reference>
<proteinExistence type="evidence at protein level"/>
<comment type="function">
    <text>Does not seem to have an in-vivo activity on glucarate or idarate. Its real substrate is unknown.</text>
</comment>
<comment type="cofactor">
    <cofactor evidence="1">
        <name>a divalent metal cation</name>
        <dbReference type="ChEBI" id="CHEBI:60240"/>
    </cofactor>
</comment>
<comment type="biophysicochemical properties">
    <kinetics>
        <KM evidence="3">170 uM for idarate</KM>
        <KM evidence="3">320 uM for glucarate</KM>
    </kinetics>
</comment>
<comment type="similarity">
    <text evidence="4">Belongs to the mandelate racemase/muconate lactonizing enzyme family. GlucD subfamily.</text>
</comment>
<dbReference type="EC" id="4.2.1.-"/>
<dbReference type="EMBL" id="U29581">
    <property type="protein sequence ID" value="AAB40438.1"/>
    <property type="molecule type" value="Genomic_DNA"/>
</dbReference>
<dbReference type="EMBL" id="U00096">
    <property type="protein sequence ID" value="AAC75830.1"/>
    <property type="molecule type" value="Genomic_DNA"/>
</dbReference>
<dbReference type="EMBL" id="AP009048">
    <property type="protein sequence ID" value="BAE76860.1"/>
    <property type="molecule type" value="Genomic_DNA"/>
</dbReference>
<dbReference type="PIR" id="H65060">
    <property type="entry name" value="H65060"/>
</dbReference>
<dbReference type="RefSeq" id="NP_417268.1">
    <property type="nucleotide sequence ID" value="NC_000913.3"/>
</dbReference>
<dbReference type="RefSeq" id="WP_000235391.1">
    <property type="nucleotide sequence ID" value="NZ_LN832404.1"/>
</dbReference>
<dbReference type="PDB" id="4GYP">
    <property type="method" value="X-ray"/>
    <property type="resolution" value="2.10 A"/>
    <property type="chains" value="C/D=2-446"/>
</dbReference>
<dbReference type="PDB" id="4IL0">
    <property type="method" value="X-ray"/>
    <property type="resolution" value="2.80 A"/>
    <property type="chains" value="A/B/C/D/E/F/G/H=1-446"/>
</dbReference>
<dbReference type="PDBsum" id="4GYP"/>
<dbReference type="PDBsum" id="4IL0"/>
<dbReference type="SMR" id="Q46915"/>
<dbReference type="BioGRID" id="4260899">
    <property type="interactions" value="25"/>
</dbReference>
<dbReference type="FunCoup" id="Q46915">
    <property type="interactions" value="11"/>
</dbReference>
<dbReference type="IntAct" id="Q46915">
    <property type="interactions" value="3"/>
</dbReference>
<dbReference type="STRING" id="511145.b2788"/>
<dbReference type="PaxDb" id="511145-b2788"/>
<dbReference type="EnsemblBacteria" id="AAC75830">
    <property type="protein sequence ID" value="AAC75830"/>
    <property type="gene ID" value="b2788"/>
</dbReference>
<dbReference type="GeneID" id="947261"/>
<dbReference type="KEGG" id="ecj:JW2759"/>
<dbReference type="KEGG" id="eco:b2788"/>
<dbReference type="KEGG" id="ecoc:C3026_15330"/>
<dbReference type="PATRIC" id="fig|1411691.4.peg.3946"/>
<dbReference type="EchoBASE" id="EB2960"/>
<dbReference type="eggNOG" id="COG4948">
    <property type="taxonomic scope" value="Bacteria"/>
</dbReference>
<dbReference type="HOGENOM" id="CLU_030273_9_0_6"/>
<dbReference type="InParanoid" id="Q46915"/>
<dbReference type="OMA" id="HNAWFTR"/>
<dbReference type="OrthoDB" id="193563at2"/>
<dbReference type="PhylomeDB" id="Q46915"/>
<dbReference type="BioCyc" id="EcoCyc:G7446-MONOMER"/>
<dbReference type="SABIO-RK" id="Q46915"/>
<dbReference type="EvolutionaryTrace" id="Q46915"/>
<dbReference type="PRO" id="PR:Q46915"/>
<dbReference type="Proteomes" id="UP000000625">
    <property type="component" value="Chromosome"/>
</dbReference>
<dbReference type="GO" id="GO:0008872">
    <property type="term" value="F:glucarate dehydratase activity"/>
    <property type="evidence" value="ECO:0000318"/>
    <property type="project" value="GO_Central"/>
</dbReference>
<dbReference type="GO" id="GO:0046872">
    <property type="term" value="F:metal ion binding"/>
    <property type="evidence" value="ECO:0007669"/>
    <property type="project" value="UniProtKB-KW"/>
</dbReference>
<dbReference type="GO" id="GO:0009063">
    <property type="term" value="P:amino acid catabolic process"/>
    <property type="evidence" value="ECO:0007669"/>
    <property type="project" value="InterPro"/>
</dbReference>
<dbReference type="GO" id="GO:0044248">
    <property type="term" value="P:cellular catabolic process"/>
    <property type="evidence" value="ECO:0000250"/>
    <property type="project" value="EcoCyc"/>
</dbReference>
<dbReference type="GO" id="GO:0042838">
    <property type="term" value="P:D-glucarate catabolic process"/>
    <property type="evidence" value="ECO:0000318"/>
    <property type="project" value="GO_Central"/>
</dbReference>
<dbReference type="CDD" id="cd03323">
    <property type="entry name" value="D-glucarate_dehydratase"/>
    <property type="match status" value="1"/>
</dbReference>
<dbReference type="FunFam" id="3.20.20.120:FF:000003">
    <property type="entry name" value="Glucarate dehydratase"/>
    <property type="match status" value="1"/>
</dbReference>
<dbReference type="Gene3D" id="3.20.20.120">
    <property type="entry name" value="Enolase-like C-terminal domain"/>
    <property type="match status" value="1"/>
</dbReference>
<dbReference type="Gene3D" id="3.30.390.10">
    <property type="entry name" value="Enolase-like, N-terminal domain"/>
    <property type="match status" value="1"/>
</dbReference>
<dbReference type="InterPro" id="IPR034593">
    <property type="entry name" value="DgoD-like"/>
</dbReference>
<dbReference type="InterPro" id="IPR036849">
    <property type="entry name" value="Enolase-like_C_sf"/>
</dbReference>
<dbReference type="InterPro" id="IPR029017">
    <property type="entry name" value="Enolase-like_N"/>
</dbReference>
<dbReference type="InterPro" id="IPR029065">
    <property type="entry name" value="Enolase_C-like"/>
</dbReference>
<dbReference type="InterPro" id="IPR034598">
    <property type="entry name" value="GlucD-like"/>
</dbReference>
<dbReference type="InterPro" id="IPR018110">
    <property type="entry name" value="Mandel_Rmase/mucon_lact_enz_CS"/>
</dbReference>
<dbReference type="InterPro" id="IPR013342">
    <property type="entry name" value="Mandelate_racemase_C"/>
</dbReference>
<dbReference type="InterPro" id="IPR013341">
    <property type="entry name" value="Mandelate_racemase_N_dom"/>
</dbReference>
<dbReference type="PANTHER" id="PTHR48080">
    <property type="entry name" value="D-GALACTONATE DEHYDRATASE-RELATED"/>
    <property type="match status" value="1"/>
</dbReference>
<dbReference type="PANTHER" id="PTHR48080:SF1">
    <property type="entry name" value="GLUCARATE DEHYDRATASE-RELATED PROTEIN"/>
    <property type="match status" value="1"/>
</dbReference>
<dbReference type="Pfam" id="PF13378">
    <property type="entry name" value="MR_MLE_C"/>
    <property type="match status" value="1"/>
</dbReference>
<dbReference type="Pfam" id="PF02746">
    <property type="entry name" value="MR_MLE_N"/>
    <property type="match status" value="1"/>
</dbReference>
<dbReference type="SFLD" id="SFLDS00001">
    <property type="entry name" value="Enolase"/>
    <property type="match status" value="1"/>
</dbReference>
<dbReference type="SFLD" id="SFLDF00005">
    <property type="entry name" value="glucarate_dehydratase"/>
    <property type="match status" value="1"/>
</dbReference>
<dbReference type="SMART" id="SM00922">
    <property type="entry name" value="MR_MLE"/>
    <property type="match status" value="1"/>
</dbReference>
<dbReference type="SUPFAM" id="SSF51604">
    <property type="entry name" value="Enolase C-terminal domain-like"/>
    <property type="match status" value="1"/>
</dbReference>
<dbReference type="SUPFAM" id="SSF54826">
    <property type="entry name" value="Enolase N-terminal domain-like"/>
    <property type="match status" value="1"/>
</dbReference>
<dbReference type="PROSITE" id="PS00908">
    <property type="entry name" value="MR_MLE_1"/>
    <property type="match status" value="1"/>
</dbReference>
<sequence>MATQSSPVITDMKVIPVAGHDSMLLNIGGAHNAYFTRNIVVLTDNAGHTGIGEAPGGDVIYQTLVDAIPMVLGQEVARLNKVVQQVHKGNQAADFDTFGKGAWTFELRVNAVAALEAALLDLLGKALNVPVCELLGPGKQREAITVLGYLFYIGDRTKTDLPYVENTPGNHEWYQLRHQKAMNSEAVVRLAEASQDRYGFKDFKLKGGVLPGEQEIDTVRALKKRFPDARITVDPNGAWLLDEAISLCKGLNDVLTYAEDPCGAEQGFSGREVMAEFRRATGLPVATNMIATNWREMGHAVMLNAVDIPLADPHFWTLSGAVRVAQLCDDWGLTWGCHSNNHFDISLAMFTHVGAAAPGNPTAIDTHWIWQEGDCRLTQNPLEIKNGKIAVPDAPGLGVELDWEQVQKAHEAYKRLPGGARNDAGPMQYLIPGWTFDRKRPVFGRH</sequence>
<organism>
    <name type="scientific">Escherichia coli (strain K12)</name>
    <dbReference type="NCBI Taxonomy" id="83333"/>
    <lineage>
        <taxon>Bacteria</taxon>
        <taxon>Pseudomonadati</taxon>
        <taxon>Pseudomonadota</taxon>
        <taxon>Gammaproteobacteria</taxon>
        <taxon>Enterobacterales</taxon>
        <taxon>Enterobacteriaceae</taxon>
        <taxon>Escherichia</taxon>
    </lineage>
</organism>
<protein>
    <recommendedName>
        <fullName>Glucarate dehydratase-related protein</fullName>
        <shortName>GDH-RP</shortName>
        <shortName>GlucDRP</shortName>
        <ecNumber>4.2.1.-</ecNumber>
    </recommendedName>
</protein>
<gene>
    <name type="primary">gudX</name>
    <name type="synonym">ygcY</name>
    <name type="ordered locus">b2788</name>
    <name type="ordered locus">JW2759</name>
</gene>
<evidence type="ECO:0000250" key="1"/>
<evidence type="ECO:0000255" key="2"/>
<evidence type="ECO:0000269" key="3">
    <source>
    </source>
</evidence>
<evidence type="ECO:0000305" key="4"/>
<evidence type="ECO:0007829" key="5">
    <source>
        <dbReference type="PDB" id="4GYP"/>
    </source>
</evidence>
<evidence type="ECO:0007829" key="6">
    <source>
        <dbReference type="PDB" id="4IL0"/>
    </source>
</evidence>
<keyword id="KW-0002">3D-structure</keyword>
<keyword id="KW-0903">Direct protein sequencing</keyword>
<keyword id="KW-0456">Lyase</keyword>
<keyword id="KW-0460">Magnesium</keyword>
<keyword id="KW-0479">Metal-binding</keyword>
<keyword id="KW-1185">Reference proteome</keyword>
<accession>Q46915</accession>
<accession>Q2MA46</accession>
<feature type="chain" id="PRO_0000171266" description="Glucarate dehydratase-related protein">
    <location>
        <begin position="1"/>
        <end position="446"/>
    </location>
</feature>
<feature type="active site" description="Proton acceptor" evidence="2">
    <location>
        <position position="206"/>
    </location>
</feature>
<feature type="active site" description="Proton acceptor" evidence="2">
    <location>
        <position position="338"/>
    </location>
</feature>
<feature type="binding site" evidence="1">
    <location>
        <position position="31"/>
    </location>
    <ligand>
        <name>substrate</name>
    </ligand>
</feature>
<feature type="binding site" evidence="1">
    <location>
        <position position="104"/>
    </location>
    <ligand>
        <name>substrate</name>
    </ligand>
</feature>
<feature type="binding site" evidence="1">
    <location>
        <position position="149"/>
    </location>
    <ligand>
        <name>substrate</name>
    </ligand>
</feature>
<feature type="binding site" evidence="1">
    <location>
        <position position="204"/>
    </location>
    <ligand>
        <name>substrate</name>
    </ligand>
</feature>
<feature type="binding site" evidence="1">
    <location>
        <begin position="234"/>
        <end position="236"/>
    </location>
    <ligand>
        <name>substrate</name>
    </ligand>
</feature>
<feature type="binding site" evidence="2">
    <location>
        <position position="234"/>
    </location>
    <ligand>
        <name>Mg(2+)</name>
        <dbReference type="ChEBI" id="CHEBI:18420"/>
    </ligand>
</feature>
<feature type="binding site" evidence="2">
    <location>
        <position position="265"/>
    </location>
    <ligand>
        <name>Mg(2+)</name>
        <dbReference type="ChEBI" id="CHEBI:18420"/>
    </ligand>
</feature>
<feature type="binding site" evidence="2">
    <location>
        <position position="288"/>
    </location>
    <ligand>
        <name>Mg(2+)</name>
        <dbReference type="ChEBI" id="CHEBI:18420"/>
    </ligand>
</feature>
<feature type="binding site" evidence="1">
    <location>
        <position position="288"/>
    </location>
    <ligand>
        <name>substrate</name>
    </ligand>
</feature>
<feature type="binding site" evidence="1">
    <location>
        <begin position="338"/>
        <end position="340"/>
    </location>
    <ligand>
        <name>substrate</name>
    </ligand>
</feature>
<feature type="binding site" evidence="1">
    <location>
        <position position="367"/>
    </location>
    <ligand>
        <name>substrate</name>
    </ligand>
</feature>
<feature type="binding site" evidence="1">
    <location>
        <position position="421"/>
    </location>
    <ligand>
        <name>substrate</name>
    </ligand>
</feature>
<feature type="strand" evidence="5">
    <location>
        <begin position="8"/>
        <end position="20"/>
    </location>
</feature>
<feature type="strand" evidence="5">
    <location>
        <begin position="24"/>
        <end position="26"/>
    </location>
</feature>
<feature type="strand" evidence="5">
    <location>
        <begin position="33"/>
        <end position="44"/>
    </location>
</feature>
<feature type="strand" evidence="5">
    <location>
        <begin position="49"/>
        <end position="55"/>
    </location>
</feature>
<feature type="helix" evidence="5">
    <location>
        <begin position="58"/>
        <end position="66"/>
    </location>
</feature>
<feature type="helix" evidence="5">
    <location>
        <begin position="68"/>
        <end position="71"/>
    </location>
</feature>
<feature type="helix" evidence="5">
    <location>
        <begin position="76"/>
        <end position="78"/>
    </location>
</feature>
<feature type="helix" evidence="5">
    <location>
        <begin position="79"/>
        <end position="90"/>
    </location>
</feature>
<feature type="helix" evidence="5">
    <location>
        <begin position="92"/>
        <end position="99"/>
    </location>
</feature>
<feature type="helix" evidence="6">
    <location>
        <begin position="104"/>
        <end position="106"/>
    </location>
</feature>
<feature type="helix" evidence="5">
    <location>
        <begin position="107"/>
        <end position="127"/>
    </location>
</feature>
<feature type="helix" evidence="5">
    <location>
        <begin position="131"/>
        <end position="134"/>
    </location>
</feature>
<feature type="strand" evidence="5">
    <location>
        <begin position="142"/>
        <end position="146"/>
    </location>
</feature>
<feature type="strand" evidence="5">
    <location>
        <begin position="148"/>
        <end position="150"/>
    </location>
</feature>
<feature type="helix" evidence="5">
    <location>
        <begin position="156"/>
        <end position="158"/>
    </location>
</feature>
<feature type="strand" evidence="6">
    <location>
        <begin position="169"/>
        <end position="171"/>
    </location>
</feature>
<feature type="helix" evidence="5">
    <location>
        <begin position="173"/>
        <end position="176"/>
    </location>
</feature>
<feature type="helix" evidence="5">
    <location>
        <begin position="184"/>
        <end position="198"/>
    </location>
</feature>
<feature type="strand" evidence="5">
    <location>
        <begin position="201"/>
        <end position="206"/>
    </location>
</feature>
<feature type="strand" evidence="5">
    <location>
        <begin position="208"/>
        <end position="210"/>
    </location>
</feature>
<feature type="helix" evidence="5">
    <location>
        <begin position="212"/>
        <end position="225"/>
    </location>
</feature>
<feature type="strand" evidence="5">
    <location>
        <begin position="229"/>
        <end position="234"/>
    </location>
</feature>
<feature type="helix" evidence="5">
    <location>
        <begin position="241"/>
        <end position="247"/>
    </location>
</feature>
<feature type="turn" evidence="5">
    <location>
        <begin position="248"/>
        <end position="250"/>
    </location>
</feature>
<feature type="turn" evidence="5">
    <location>
        <begin position="252"/>
        <end position="254"/>
    </location>
</feature>
<feature type="strand" evidence="5">
    <location>
        <begin position="256"/>
        <end position="260"/>
    </location>
</feature>
<feature type="helix" evidence="5">
    <location>
        <begin position="270"/>
        <end position="281"/>
    </location>
</feature>
<feature type="strand" evidence="5">
    <location>
        <begin position="285"/>
        <end position="290"/>
    </location>
</feature>
<feature type="helix" evidence="5">
    <location>
        <begin position="294"/>
        <end position="302"/>
    </location>
</feature>
<feature type="strand" evidence="5">
    <location>
        <begin position="307"/>
        <end position="310"/>
    </location>
</feature>
<feature type="helix" evidence="5">
    <location>
        <begin position="313"/>
        <end position="316"/>
    </location>
</feature>
<feature type="helix" evidence="5">
    <location>
        <begin position="318"/>
        <end position="330"/>
    </location>
</feature>
<feature type="helix" evidence="5">
    <location>
        <begin position="344"/>
        <end position="355"/>
    </location>
</feature>
<feature type="helix" evidence="5">
    <location>
        <begin position="368"/>
        <end position="371"/>
    </location>
</feature>
<feature type="turn" evidence="5">
    <location>
        <begin position="372"/>
        <end position="374"/>
    </location>
</feature>
<feature type="strand" evidence="5">
    <location>
        <begin position="378"/>
        <end position="380"/>
    </location>
</feature>
<feature type="strand" evidence="5">
    <location>
        <begin position="388"/>
        <end position="390"/>
    </location>
</feature>
<feature type="strand" evidence="5">
    <location>
        <begin position="394"/>
        <end position="396"/>
    </location>
</feature>
<feature type="helix" evidence="5">
    <location>
        <begin position="403"/>
        <end position="414"/>
    </location>
</feature>
<feature type="helix" evidence="5">
    <location>
        <begin position="424"/>
        <end position="430"/>
    </location>
</feature>
<name>GUDX_ECOLI</name>